<evidence type="ECO:0000250" key="1">
    <source>
        <dbReference type="UniProtKB" id="Q12051"/>
    </source>
</evidence>
<evidence type="ECO:0000269" key="2">
    <source>
    </source>
</evidence>
<evidence type="ECO:0000269" key="3">
    <source>
    </source>
</evidence>
<evidence type="ECO:0000269" key="4">
    <source>
    </source>
</evidence>
<evidence type="ECO:0000305" key="5"/>
<evidence type="ECO:0000305" key="6">
    <source>
    </source>
</evidence>
<evidence type="ECO:0000312" key="7">
    <source>
        <dbReference type="EMBL" id="CCP43300.1"/>
    </source>
</evidence>
<accession>O06428</accession>
<accession>F2GMK7</accession>
<accession>I6X9B6</accession>
<accession>Q7D9M6</accession>
<reference key="1">
    <citation type="journal article" date="1998" name="Nature">
        <title>Deciphering the biology of Mycobacterium tuberculosis from the complete genome sequence.</title>
        <authorList>
            <person name="Cole S.T."/>
            <person name="Brosch R."/>
            <person name="Parkhill J."/>
            <person name="Garnier T."/>
            <person name="Churcher C.M."/>
            <person name="Harris D.E."/>
            <person name="Gordon S.V."/>
            <person name="Eiglmeier K."/>
            <person name="Gas S."/>
            <person name="Barry C.E. III"/>
            <person name="Tekaia F."/>
            <person name="Badcock K."/>
            <person name="Basham D."/>
            <person name="Brown D."/>
            <person name="Chillingworth T."/>
            <person name="Connor R."/>
            <person name="Davies R.M."/>
            <person name="Devlin K."/>
            <person name="Feltwell T."/>
            <person name="Gentles S."/>
            <person name="Hamlin N."/>
            <person name="Holroyd S."/>
            <person name="Hornsby T."/>
            <person name="Jagels K."/>
            <person name="Krogh A."/>
            <person name="McLean J."/>
            <person name="Moule S."/>
            <person name="Murphy L.D."/>
            <person name="Oliver S."/>
            <person name="Osborne J."/>
            <person name="Quail M.A."/>
            <person name="Rajandream M.A."/>
            <person name="Rogers J."/>
            <person name="Rutter S."/>
            <person name="Seeger K."/>
            <person name="Skelton S."/>
            <person name="Squares S."/>
            <person name="Squares R."/>
            <person name="Sulston J.E."/>
            <person name="Taylor K."/>
            <person name="Whitehead S."/>
            <person name="Barrell B.G."/>
        </authorList>
    </citation>
    <scope>NUCLEOTIDE SEQUENCE [LARGE SCALE GENOMIC DNA]</scope>
    <source>
        <strain>ATCC 25618 / H37Rv</strain>
    </source>
</reference>
<reference key="2">
    <citation type="journal article" date="2011" name="Mol. Cell. Proteomics">
        <title>Proteogenomic analysis of Mycobacterium tuberculosis by high resolution mass spectrometry.</title>
        <authorList>
            <person name="Kelkar D.S."/>
            <person name="Kumar D."/>
            <person name="Kumar P."/>
            <person name="Balakrishnan L."/>
            <person name="Muthusamy B."/>
            <person name="Yadav A.K."/>
            <person name="Shrivastava P."/>
            <person name="Marimuthu A."/>
            <person name="Anand S."/>
            <person name="Sundaram H."/>
            <person name="Kingsbury R."/>
            <person name="Harsha H.C."/>
            <person name="Nair B."/>
            <person name="Prasad T.S."/>
            <person name="Chauhan D.S."/>
            <person name="Katoch K."/>
            <person name="Katoch V.M."/>
            <person name="Kumar P."/>
            <person name="Chaerkady R."/>
            <person name="Ramachandran S."/>
            <person name="Dash D."/>
            <person name="Pandey A."/>
        </authorList>
    </citation>
    <scope>IDENTIFICATION BY MASS SPECTROMETRY [LARGE SCALE ANALYSIS]</scope>
    <source>
        <strain>ATCC 25618 / H37Rv</strain>
    </source>
</reference>
<reference key="3">
    <citation type="journal article" date="2012" name="Front. Microbiol.">
        <title>Functional characterization and evolution of the isotuberculosinol operon in Mycobacterium tuberculosis and related Mycobacteria.</title>
        <authorList>
            <person name="Mann F.M."/>
            <person name="Xu M."/>
            <person name="Davenport E.K."/>
            <person name="Peters R.J."/>
        </authorList>
    </citation>
    <scope>FUNCTION</scope>
    <scope>CATALYTIC ACTIVITY</scope>
    <scope>BIOPHYSICOCHEMICAL PROPERTIES</scope>
</reference>
<reference key="4">
    <citation type="journal article" date="2018" name="Molecules">
        <title>Arginine in the FARM and SARM: a role in chain-length determination for arginine in the aspartate-rich motifs of isoprenyl diphosphate synthases from Mycobacterium tuberculosis.</title>
        <authorList>
            <person name="Nagel R."/>
            <person name="Thomas J.A."/>
            <person name="Adekunle F.A."/>
            <person name="Mann F.M."/>
            <person name="Peters R.J."/>
        </authorList>
    </citation>
    <scope>FUNCTION</scope>
    <scope>CATALYTIC ACTIVITY</scope>
    <scope>DOMAIN</scope>
    <scope>MUTAGENESIS OF ASP-98 AND ASP-223</scope>
</reference>
<reference key="5">
    <citation type="journal article" date="2020" name="ChemBioChem">
        <title>Insight into isoprenoid biosynthesis by functional analysis of isoprenyl diphosphate synthases from Mycobacterium vanbaalenii and Mycobacterium tuberculosis.</title>
        <authorList>
            <person name="Abe T."/>
            <person name="Ozaki S."/>
            <person name="Ueda D."/>
            <person name="Sato T."/>
        </authorList>
    </citation>
    <scope>FUNCTION</scope>
    <scope>CATALYTIC ACTIVITY</scope>
    <scope>COFACTOR</scope>
    <scope>PATHWAY</scope>
</reference>
<gene>
    <name evidence="7" type="primary">grcC1</name>
    <name evidence="7" type="ordered locus">Rv0562</name>
</gene>
<protein>
    <recommendedName>
        <fullName evidence="5">Nonaprenyl diphosphate synthase</fullName>
        <ecNumber evidence="4">2.5.1.85</ecNumber>
    </recommendedName>
    <alternativeName>
        <fullName evidence="5">(2E,6E)-farnesyl diphosphate synthase</fullName>
        <shortName evidence="5">E,E-FPP synthase</shortName>
        <shortName evidence="5">FPP synthase</shortName>
        <ecNumber evidence="2 4">2.5.1.10</ecNumber>
    </alternativeName>
    <alternativeName>
        <fullName evidence="5">Geranylgeranyl diphosphate synthase</fullName>
        <shortName evidence="5">GGPP synthase</shortName>
        <shortName evidence="5">GGPS</shortName>
        <ecNumber evidence="2 3 4">2.5.1.29</ecNumber>
    </alternativeName>
</protein>
<keyword id="KW-0444">Lipid biosynthesis</keyword>
<keyword id="KW-0443">Lipid metabolism</keyword>
<keyword id="KW-0460">Magnesium</keyword>
<keyword id="KW-0479">Metal-binding</keyword>
<keyword id="KW-1185">Reference proteome</keyword>
<keyword id="KW-0808">Transferase</keyword>
<comment type="function">
    <text evidence="2 3 4">Catalyzes the sequential condensations of isopentenyl pyrophosphate (IPP) with geranyl diphosphate (GPP) to yield (2E,6E)-farnesyl diphosphate (E,E-FPP), with E,E-FPP to yield geranylgeranyl diphosphate (GGPP) and with GGPP to yield nonaprenyl diphosphate (PubMed:23091471, PubMed:30301210, PubMed:32495977). May also have weak activity with dimethylallyl diphosphate (DMAPP) (PubMed:23091471).</text>
</comment>
<comment type="catalytic activity">
    <reaction evidence="2 4">
        <text>isopentenyl diphosphate + (2E)-geranyl diphosphate = (2E,6E)-farnesyl diphosphate + diphosphate</text>
        <dbReference type="Rhea" id="RHEA:19361"/>
        <dbReference type="ChEBI" id="CHEBI:33019"/>
        <dbReference type="ChEBI" id="CHEBI:58057"/>
        <dbReference type="ChEBI" id="CHEBI:128769"/>
        <dbReference type="ChEBI" id="CHEBI:175763"/>
        <dbReference type="EC" id="2.5.1.10"/>
    </reaction>
    <physiologicalReaction direction="left-to-right" evidence="2 4">
        <dbReference type="Rhea" id="RHEA:19362"/>
    </physiologicalReaction>
</comment>
<comment type="catalytic activity">
    <reaction evidence="2 3 4">
        <text>isopentenyl diphosphate + (2E,6E)-farnesyl diphosphate = (2E,6E,10E)-geranylgeranyl diphosphate + diphosphate</text>
        <dbReference type="Rhea" id="RHEA:17653"/>
        <dbReference type="ChEBI" id="CHEBI:33019"/>
        <dbReference type="ChEBI" id="CHEBI:58756"/>
        <dbReference type="ChEBI" id="CHEBI:128769"/>
        <dbReference type="ChEBI" id="CHEBI:175763"/>
        <dbReference type="EC" id="2.5.1.29"/>
    </reaction>
    <physiologicalReaction direction="left-to-right" evidence="2 3 4">
        <dbReference type="Rhea" id="RHEA:17654"/>
    </physiologicalReaction>
</comment>
<comment type="catalytic activity">
    <reaction evidence="4">
        <text>5 isopentenyl diphosphate + (2E,6E,10E)-geranylgeranyl diphosphate = all-trans-nonaprenyl diphosphate + 5 diphosphate</text>
        <dbReference type="Rhea" id="RHEA:27594"/>
        <dbReference type="ChEBI" id="CHEBI:33019"/>
        <dbReference type="ChEBI" id="CHEBI:58391"/>
        <dbReference type="ChEBI" id="CHEBI:58756"/>
        <dbReference type="ChEBI" id="CHEBI:128769"/>
        <dbReference type="EC" id="2.5.1.85"/>
    </reaction>
    <physiologicalReaction direction="left-to-right" evidence="4">
        <dbReference type="Rhea" id="RHEA:27595"/>
    </physiologicalReaction>
</comment>
<comment type="cofactor">
    <cofactor evidence="4">
        <name>Mg(2+)</name>
        <dbReference type="ChEBI" id="CHEBI:18420"/>
    </cofactor>
    <text evidence="1">Binds 2 Mg(2+) ions per subunit.</text>
</comment>
<comment type="biophysicochemical properties">
    <kinetics>
        <KM evidence="2">1.7 uM for IPP</KM>
        <KM evidence="2">2.3 uM for GPP</KM>
        <KM evidence="2">11 uM for FPP</KM>
        <KM evidence="2">5 uM for DMAPP</KM>
        <text evidence="2">kcat is 0.3 min(-1) with GPP as substrate. kcat is 0.7 min(-1) with FPP as substrate. kcat is 0.17 min(-1) with DMAPP as substrate.</text>
    </kinetics>
</comment>
<comment type="pathway">
    <text evidence="4">Isoprenoid biosynthesis; farnesyl diphosphate biosynthesis; farnesyl diphosphate from geranyl diphosphate and isopentenyl diphosphate.</text>
</comment>
<comment type="pathway">
    <text evidence="4">Isoprenoid biosynthesis; geranylgeranyl diphosphate biosynthesis; geranylgeranyl diphosphate from farnesyl diphosphate and isopentenyl diphosphate: step 1/1.</text>
</comment>
<comment type="domain">
    <text evidence="6">Contains the canonical two aspartate-rich DDxxD motifs, designated as FARM (the first aspartate-rich motif) and SARM (the second aspartate-rich motif). The primary role of the FARM and SARM is the chelation of the divalent magnesium ion cofactors that assist substrate binding and catalysis, but it may also play a role in determining product chain length.</text>
</comment>
<comment type="similarity">
    <text evidence="5">Belongs to the FPP/GGPP synthase family.</text>
</comment>
<feature type="chain" id="PRO_0000451297" description="Nonaprenyl diphosphate synthase">
    <location>
        <begin position="1"/>
        <end position="335"/>
    </location>
</feature>
<feature type="short sequence motif" description="DDXXD motif" evidence="6">
    <location>
        <begin position="97"/>
        <end position="101"/>
    </location>
</feature>
<feature type="short sequence motif" description="DDXXD motif" evidence="6">
    <location>
        <begin position="223"/>
        <end position="227"/>
    </location>
</feature>
<feature type="binding site" evidence="1">
    <location>
        <position position="57"/>
    </location>
    <ligand>
        <name>isopentenyl diphosphate</name>
        <dbReference type="ChEBI" id="CHEBI:128769"/>
    </ligand>
</feature>
<feature type="binding site" evidence="1">
    <location>
        <position position="60"/>
    </location>
    <ligand>
        <name>isopentenyl diphosphate</name>
        <dbReference type="ChEBI" id="CHEBI:128769"/>
    </ligand>
</feature>
<feature type="binding site" evidence="1">
    <location>
        <position position="90"/>
    </location>
    <ligand>
        <name>isopentenyl diphosphate</name>
        <dbReference type="ChEBI" id="CHEBI:128769"/>
    </ligand>
</feature>
<feature type="binding site" evidence="1">
    <location>
        <position position="97"/>
    </location>
    <ligand>
        <name>Mg(2+)</name>
        <dbReference type="ChEBI" id="CHEBI:18420"/>
        <label>1</label>
    </ligand>
</feature>
<feature type="binding site" evidence="1">
    <location>
        <position position="97"/>
    </location>
    <ligand>
        <name>Mg(2+)</name>
        <dbReference type="ChEBI" id="CHEBI:18420"/>
        <label>2</label>
    </ligand>
</feature>
<feature type="binding site" evidence="1">
    <location>
        <position position="101"/>
    </location>
    <ligand>
        <name>Mg(2+)</name>
        <dbReference type="ChEBI" id="CHEBI:18420"/>
        <label>1</label>
    </ligand>
</feature>
<feature type="binding site" evidence="1">
    <location>
        <position position="101"/>
    </location>
    <ligand>
        <name>Mg(2+)</name>
        <dbReference type="ChEBI" id="CHEBI:18420"/>
        <label>2</label>
    </ligand>
</feature>
<feature type="binding site" evidence="1">
    <location>
        <position position="107"/>
    </location>
    <ligand>
        <name>isopentenyl diphosphate</name>
        <dbReference type="ChEBI" id="CHEBI:128769"/>
    </ligand>
</feature>
<feature type="site" description="Important for determining product chain length" evidence="6">
    <location>
        <position position="98"/>
    </location>
</feature>
<feature type="site" description="Important for determining product chain length" evidence="6">
    <location>
        <position position="223"/>
    </location>
</feature>
<feature type="mutagenesis site" description="Leads to the appearance of shorter chain products, GPP and E,E-FPP, with only small amounts of GGPP produced." evidence="3">
    <original>D</original>
    <variation>R</variation>
    <location>
        <position position="98"/>
    </location>
</feature>
<feature type="mutagenesis site" description="Leads to the appearance of shorter chain products, GPP and E,E-FPP, with only small amounts of GGPP produced." evidence="3">
    <original>D</original>
    <variation>R</variation>
    <location>
        <position position="223"/>
    </location>
</feature>
<name>NPPPS_MYCTU</name>
<proteinExistence type="evidence at protein level"/>
<organism>
    <name type="scientific">Mycobacterium tuberculosis (strain ATCC 25618 / H37Rv)</name>
    <dbReference type="NCBI Taxonomy" id="83332"/>
    <lineage>
        <taxon>Bacteria</taxon>
        <taxon>Bacillati</taxon>
        <taxon>Actinomycetota</taxon>
        <taxon>Actinomycetes</taxon>
        <taxon>Mycobacteriales</taxon>
        <taxon>Mycobacteriaceae</taxon>
        <taxon>Mycobacterium</taxon>
        <taxon>Mycobacterium tuberculosis complex</taxon>
    </lineage>
</organism>
<sequence length="335" mass="35560">MRTPATVVAGVDLGDAVFAAAVRAGVARVEQLMDTELRQADEVMSDSLLHLFNAGGKRFRPLFTVLSAQIGPQPDAAAVTVAGAVIEMIHLATLYHDDVMDEAQVRRGAPSANAQWGNNVAILAGDYLLATASRLVARLGPEAVRIIADTFAQLVTGQMRETRGTSENVDSIEQYLKVVQEKTGSLIGAAGRLGGMFSGATDEQVERLSRLGGVVGTAFQIADDIIDIDSESDESGKLPGTDVREGVHTLPMLYALRESGPDCARLRALLNGPVDDDAEVREALTLLRASPGMARAKDVLAQYAAQARHELALLPDVPGRRALAALVDYTVSRHG</sequence>
<dbReference type="EC" id="2.5.1.85" evidence="4"/>
<dbReference type="EC" id="2.5.1.10" evidence="2 4"/>
<dbReference type="EC" id="2.5.1.29" evidence="2 3 4"/>
<dbReference type="EMBL" id="AL123456">
    <property type="protein sequence ID" value="CCP43300.1"/>
    <property type="molecule type" value="Genomic_DNA"/>
</dbReference>
<dbReference type="RefSeq" id="NP_215076.1">
    <property type="nucleotide sequence ID" value="NC_000962.3"/>
</dbReference>
<dbReference type="SMR" id="O06428"/>
<dbReference type="FunCoup" id="O06428">
    <property type="interactions" value="270"/>
</dbReference>
<dbReference type="STRING" id="83332.Rv0562"/>
<dbReference type="PaxDb" id="83332-Rv0562"/>
<dbReference type="DNASU" id="887647"/>
<dbReference type="GeneID" id="887647"/>
<dbReference type="KEGG" id="mtu:Rv0562"/>
<dbReference type="KEGG" id="mtv:RVBD_0562"/>
<dbReference type="PATRIC" id="fig|83332.111.peg.619"/>
<dbReference type="TubercuList" id="Rv0562"/>
<dbReference type="eggNOG" id="COG0142">
    <property type="taxonomic scope" value="Bacteria"/>
</dbReference>
<dbReference type="InParanoid" id="O06428"/>
<dbReference type="OrthoDB" id="4497239at2"/>
<dbReference type="PhylomeDB" id="O06428"/>
<dbReference type="UniPathway" id="UPA00389">
    <property type="reaction ID" value="UER00564"/>
</dbReference>
<dbReference type="Proteomes" id="UP000001584">
    <property type="component" value="Chromosome"/>
</dbReference>
<dbReference type="GO" id="GO:0009274">
    <property type="term" value="C:peptidoglycan-based cell wall"/>
    <property type="evidence" value="ECO:0007005"/>
    <property type="project" value="MTBBASE"/>
</dbReference>
<dbReference type="GO" id="GO:0005886">
    <property type="term" value="C:plasma membrane"/>
    <property type="evidence" value="ECO:0007005"/>
    <property type="project" value="MTBBASE"/>
</dbReference>
<dbReference type="GO" id="GO:0004337">
    <property type="term" value="F:(2E,6E)-farnesyl diphosphate synthase activity"/>
    <property type="evidence" value="ECO:0007669"/>
    <property type="project" value="UniProtKB-EC"/>
</dbReference>
<dbReference type="GO" id="GO:0052924">
    <property type="term" value="F:all-trans-nonaprenyl-diphosphate synthase (geranylgeranyl-diphosphate specific) activity"/>
    <property type="evidence" value="ECO:0007669"/>
    <property type="project" value="UniProtKB-EC"/>
</dbReference>
<dbReference type="GO" id="GO:0004311">
    <property type="term" value="F:geranylgeranyl diphosphate synthase activity"/>
    <property type="evidence" value="ECO:0007669"/>
    <property type="project" value="UniProtKB-EC"/>
</dbReference>
<dbReference type="GO" id="GO:0046872">
    <property type="term" value="F:metal ion binding"/>
    <property type="evidence" value="ECO:0007669"/>
    <property type="project" value="UniProtKB-KW"/>
</dbReference>
<dbReference type="GO" id="GO:0004659">
    <property type="term" value="F:prenyltransferase activity"/>
    <property type="evidence" value="ECO:0000318"/>
    <property type="project" value="GO_Central"/>
</dbReference>
<dbReference type="GO" id="GO:0033386">
    <property type="term" value="P:geranylgeranyl diphosphate biosynthetic process"/>
    <property type="evidence" value="ECO:0007669"/>
    <property type="project" value="UniProtKB-UniPathway"/>
</dbReference>
<dbReference type="GO" id="GO:0008299">
    <property type="term" value="P:isoprenoid biosynthetic process"/>
    <property type="evidence" value="ECO:0000318"/>
    <property type="project" value="GO_Central"/>
</dbReference>
<dbReference type="CDD" id="cd00685">
    <property type="entry name" value="Trans_IPPS_HT"/>
    <property type="match status" value="1"/>
</dbReference>
<dbReference type="Gene3D" id="1.10.600.10">
    <property type="entry name" value="Farnesyl Diphosphate Synthase"/>
    <property type="match status" value="1"/>
</dbReference>
<dbReference type="InterPro" id="IPR008949">
    <property type="entry name" value="Isoprenoid_synthase_dom_sf"/>
</dbReference>
<dbReference type="InterPro" id="IPR053541">
    <property type="entry name" value="Polyprenyl_diphosphate_synth"/>
</dbReference>
<dbReference type="InterPro" id="IPR000092">
    <property type="entry name" value="Polyprenyl_synt"/>
</dbReference>
<dbReference type="InterPro" id="IPR033749">
    <property type="entry name" value="Polyprenyl_synt_CS"/>
</dbReference>
<dbReference type="NCBIfam" id="NF042417">
    <property type="entry name" value="NPPPS_Mycobact"/>
    <property type="match status" value="1"/>
</dbReference>
<dbReference type="PANTHER" id="PTHR12001:SF69">
    <property type="entry name" value="ALL TRANS-POLYPRENYL-DIPHOSPHATE SYNTHASE PDSS1"/>
    <property type="match status" value="1"/>
</dbReference>
<dbReference type="PANTHER" id="PTHR12001">
    <property type="entry name" value="GERANYLGERANYL PYROPHOSPHATE SYNTHASE"/>
    <property type="match status" value="1"/>
</dbReference>
<dbReference type="Pfam" id="PF00348">
    <property type="entry name" value="polyprenyl_synt"/>
    <property type="match status" value="1"/>
</dbReference>
<dbReference type="SFLD" id="SFLDS00005">
    <property type="entry name" value="Isoprenoid_Synthase_Type_I"/>
    <property type="match status" value="1"/>
</dbReference>
<dbReference type="SFLD" id="SFLDG01017">
    <property type="entry name" value="Polyprenyl_Transferase_Like"/>
    <property type="match status" value="1"/>
</dbReference>
<dbReference type="SUPFAM" id="SSF48576">
    <property type="entry name" value="Terpenoid synthases"/>
    <property type="match status" value="1"/>
</dbReference>
<dbReference type="PROSITE" id="PS00444">
    <property type="entry name" value="POLYPRENYL_SYNTHASE_2"/>
    <property type="match status" value="1"/>
</dbReference>